<evidence type="ECO:0000250" key="1"/>
<evidence type="ECO:0000255" key="2">
    <source>
        <dbReference type="PROSITE-ProRule" id="PRU00541"/>
    </source>
</evidence>
<evidence type="ECO:0000255" key="3">
    <source>
        <dbReference type="PROSITE-ProRule" id="PRU00542"/>
    </source>
</evidence>
<evidence type="ECO:0000256" key="4">
    <source>
        <dbReference type="SAM" id="MobiDB-lite"/>
    </source>
</evidence>
<evidence type="ECO:0000269" key="5">
    <source>
    </source>
</evidence>
<evidence type="ECO:0000305" key="6"/>
<protein>
    <recommendedName>
        <fullName>DEAD-box ATP-dependent RNA helicase RhpA</fullName>
        <ecNumber>3.6.4.13</ecNumber>
    </recommendedName>
</protein>
<dbReference type="EC" id="3.6.4.13"/>
<dbReference type="EMBL" id="AE000511">
    <property type="protein sequence ID" value="AAD07315.1"/>
    <property type="molecule type" value="Genomic_DNA"/>
</dbReference>
<dbReference type="EMBL" id="CP003904">
    <property type="protein sequence ID" value="AFV41471.1"/>
    <property type="molecule type" value="Genomic_DNA"/>
</dbReference>
<dbReference type="PIR" id="G64550">
    <property type="entry name" value="G64550"/>
</dbReference>
<dbReference type="RefSeq" id="NP_207045.1">
    <property type="nucleotide sequence ID" value="NC_000915.1"/>
</dbReference>
<dbReference type="RefSeq" id="WP_000422563.1">
    <property type="nucleotide sequence ID" value="NC_018939.1"/>
</dbReference>
<dbReference type="SMR" id="O25029"/>
<dbReference type="DIP" id="DIP-3203N"/>
<dbReference type="FunCoup" id="O25029">
    <property type="interactions" value="273"/>
</dbReference>
<dbReference type="IntAct" id="O25029">
    <property type="interactions" value="7"/>
</dbReference>
<dbReference type="MINT" id="O25029"/>
<dbReference type="STRING" id="85962.HP_0247"/>
<dbReference type="PaxDb" id="85962-C694_01250"/>
<dbReference type="EnsemblBacteria" id="AAD07315">
    <property type="protein sequence ID" value="AAD07315"/>
    <property type="gene ID" value="HP_0247"/>
</dbReference>
<dbReference type="KEGG" id="heo:C694_01250"/>
<dbReference type="KEGG" id="hpy:HP_0247"/>
<dbReference type="PATRIC" id="fig|85962.47.peg.267"/>
<dbReference type="eggNOG" id="COG0513">
    <property type="taxonomic scope" value="Bacteria"/>
</dbReference>
<dbReference type="HOGENOM" id="CLU_003041_21_1_7"/>
<dbReference type="InParanoid" id="O25029"/>
<dbReference type="OrthoDB" id="9805696at2"/>
<dbReference type="PhylomeDB" id="O25029"/>
<dbReference type="Proteomes" id="UP000000429">
    <property type="component" value="Chromosome"/>
</dbReference>
<dbReference type="GO" id="GO:0005829">
    <property type="term" value="C:cytosol"/>
    <property type="evidence" value="ECO:0000318"/>
    <property type="project" value="GO_Central"/>
</dbReference>
<dbReference type="GO" id="GO:0005524">
    <property type="term" value="F:ATP binding"/>
    <property type="evidence" value="ECO:0007669"/>
    <property type="project" value="UniProtKB-KW"/>
</dbReference>
<dbReference type="GO" id="GO:0016887">
    <property type="term" value="F:ATP hydrolysis activity"/>
    <property type="evidence" value="ECO:0007669"/>
    <property type="project" value="RHEA"/>
</dbReference>
<dbReference type="GO" id="GO:0003724">
    <property type="term" value="F:RNA helicase activity"/>
    <property type="evidence" value="ECO:0000318"/>
    <property type="project" value="GO_Central"/>
</dbReference>
<dbReference type="GO" id="GO:0033592">
    <property type="term" value="F:RNA strand annealing activity"/>
    <property type="evidence" value="ECO:0000318"/>
    <property type="project" value="GO_Central"/>
</dbReference>
<dbReference type="GO" id="GO:0009409">
    <property type="term" value="P:response to cold"/>
    <property type="evidence" value="ECO:0000318"/>
    <property type="project" value="GO_Central"/>
</dbReference>
<dbReference type="CDD" id="cd00268">
    <property type="entry name" value="DEADc"/>
    <property type="match status" value="1"/>
</dbReference>
<dbReference type="CDD" id="cd18787">
    <property type="entry name" value="SF2_C_DEAD"/>
    <property type="match status" value="1"/>
</dbReference>
<dbReference type="FunFam" id="3.40.50.300:FF:000108">
    <property type="entry name" value="ATP-dependent RNA helicase RhlE"/>
    <property type="match status" value="1"/>
</dbReference>
<dbReference type="Gene3D" id="3.40.50.300">
    <property type="entry name" value="P-loop containing nucleotide triphosphate hydrolases"/>
    <property type="match status" value="2"/>
</dbReference>
<dbReference type="InterPro" id="IPR011545">
    <property type="entry name" value="DEAD/DEAH_box_helicase_dom"/>
</dbReference>
<dbReference type="InterPro" id="IPR050079">
    <property type="entry name" value="DEAD_box_RNA_helicase"/>
</dbReference>
<dbReference type="InterPro" id="IPR014001">
    <property type="entry name" value="Helicase_ATP-bd"/>
</dbReference>
<dbReference type="InterPro" id="IPR001650">
    <property type="entry name" value="Helicase_C-like"/>
</dbReference>
<dbReference type="InterPro" id="IPR027417">
    <property type="entry name" value="P-loop_NTPase"/>
</dbReference>
<dbReference type="InterPro" id="IPR014014">
    <property type="entry name" value="RNA_helicase_DEAD_Q_motif"/>
</dbReference>
<dbReference type="PANTHER" id="PTHR47959:SF1">
    <property type="entry name" value="ATP-DEPENDENT RNA HELICASE DBPA"/>
    <property type="match status" value="1"/>
</dbReference>
<dbReference type="PANTHER" id="PTHR47959">
    <property type="entry name" value="ATP-DEPENDENT RNA HELICASE RHLE-RELATED"/>
    <property type="match status" value="1"/>
</dbReference>
<dbReference type="Pfam" id="PF00270">
    <property type="entry name" value="DEAD"/>
    <property type="match status" value="1"/>
</dbReference>
<dbReference type="Pfam" id="PF00271">
    <property type="entry name" value="Helicase_C"/>
    <property type="match status" value="1"/>
</dbReference>
<dbReference type="SMART" id="SM00487">
    <property type="entry name" value="DEXDc"/>
    <property type="match status" value="1"/>
</dbReference>
<dbReference type="SMART" id="SM00490">
    <property type="entry name" value="HELICc"/>
    <property type="match status" value="1"/>
</dbReference>
<dbReference type="SUPFAM" id="SSF52540">
    <property type="entry name" value="P-loop containing nucleoside triphosphate hydrolases"/>
    <property type="match status" value="1"/>
</dbReference>
<dbReference type="PROSITE" id="PS51192">
    <property type="entry name" value="HELICASE_ATP_BIND_1"/>
    <property type="match status" value="1"/>
</dbReference>
<dbReference type="PROSITE" id="PS51194">
    <property type="entry name" value="HELICASE_CTER"/>
    <property type="match status" value="1"/>
</dbReference>
<dbReference type="PROSITE" id="PS51195">
    <property type="entry name" value="Q_MOTIF"/>
    <property type="match status" value="1"/>
</dbReference>
<keyword id="KW-0067">ATP-binding</keyword>
<keyword id="KW-0963">Cytoplasm</keyword>
<keyword id="KW-0347">Helicase</keyword>
<keyword id="KW-0378">Hydrolase</keyword>
<keyword id="KW-0547">Nucleotide-binding</keyword>
<keyword id="KW-1185">Reference proteome</keyword>
<keyword id="KW-0694">RNA-binding</keyword>
<comment type="function">
    <text evidence="1">DEAD-box RNA helicase probably involved in RNA degradation. Unwinds dsRNA in both 5'- and 3'-directions (By similarity).</text>
</comment>
<comment type="catalytic activity">
    <reaction>
        <text>ATP + H2O = ADP + phosphate + H(+)</text>
        <dbReference type="Rhea" id="RHEA:13065"/>
        <dbReference type="ChEBI" id="CHEBI:15377"/>
        <dbReference type="ChEBI" id="CHEBI:15378"/>
        <dbReference type="ChEBI" id="CHEBI:30616"/>
        <dbReference type="ChEBI" id="CHEBI:43474"/>
        <dbReference type="ChEBI" id="CHEBI:456216"/>
        <dbReference type="EC" id="3.6.4.13"/>
    </reaction>
</comment>
<comment type="subunit">
    <text evidence="1 5">Homodimer (By similarity). Interacts with RNase J (rnj), might be a member of a minimal RNA degradosome complex.</text>
</comment>
<comment type="subcellular location">
    <subcellularLocation>
        <location>Cytoplasm</location>
    </subcellularLocation>
    <text evidence="1">The RNaseJ-RhpA complex co-localizes with 70S ribosomes and polysomes; remains associated with ribosomes in the absence of RNase J.</text>
</comment>
<comment type="similarity">
    <text evidence="6">Belongs to the DEAD box helicase family.</text>
</comment>
<reference key="1">
    <citation type="journal article" date="1997" name="Nature">
        <title>The complete genome sequence of the gastric pathogen Helicobacter pylori.</title>
        <authorList>
            <person name="Tomb J.-F."/>
            <person name="White O."/>
            <person name="Kerlavage A.R."/>
            <person name="Clayton R.A."/>
            <person name="Sutton G.G."/>
            <person name="Fleischmann R.D."/>
            <person name="Ketchum K.A."/>
            <person name="Klenk H.-P."/>
            <person name="Gill S.R."/>
            <person name="Dougherty B.A."/>
            <person name="Nelson K.E."/>
            <person name="Quackenbush J."/>
            <person name="Zhou L."/>
            <person name="Kirkness E.F."/>
            <person name="Peterson S.N."/>
            <person name="Loftus B.J."/>
            <person name="Richardson D.L."/>
            <person name="Dodson R.J."/>
            <person name="Khalak H.G."/>
            <person name="Glodek A."/>
            <person name="McKenney K."/>
            <person name="FitzGerald L.M."/>
            <person name="Lee N."/>
            <person name="Adams M.D."/>
            <person name="Hickey E.K."/>
            <person name="Berg D.E."/>
            <person name="Gocayne J.D."/>
            <person name="Utterback T.R."/>
            <person name="Peterson J.D."/>
            <person name="Kelley J.M."/>
            <person name="Cotton M.D."/>
            <person name="Weidman J.F."/>
            <person name="Fujii C."/>
            <person name="Bowman C."/>
            <person name="Watthey L."/>
            <person name="Wallin E."/>
            <person name="Hayes W.S."/>
            <person name="Borodovsky M."/>
            <person name="Karp P.D."/>
            <person name="Smith H.O."/>
            <person name="Fraser C.M."/>
            <person name="Venter J.C."/>
        </authorList>
    </citation>
    <scope>NUCLEOTIDE SEQUENCE [LARGE SCALE GENOMIC DNA]</scope>
    <source>
        <strain>ATCC 700392 / 26695</strain>
    </source>
</reference>
<reference key="2">
    <citation type="submission" date="2012-10" db="EMBL/GenBank/DDBJ databases">
        <title>Draft genome of Helicobacter pylori.</title>
        <authorList>
            <person name="Manolov A."/>
            <person name="Prihodko E."/>
            <person name="Larin A."/>
            <person name="Karpova I."/>
            <person name="Semashko T."/>
            <person name="Alexeev D."/>
            <person name="Kostrjukova E."/>
            <person name="Govorun V."/>
        </authorList>
    </citation>
    <scope>NUCLEOTIDE SEQUENCE [LARGE SCALE GENOMIC DNA]</scope>
    <source>
        <strain>ATCC 700392 / 26695</strain>
    </source>
</reference>
<reference key="3">
    <citation type="journal article" date="2013" name="Nucleic Acids Res.">
        <title>A minimal bacterial RNase J-based degradosome is associated with translating ribosomes.</title>
        <authorList>
            <person name="Redko Y."/>
            <person name="Aubert S."/>
            <person name="Stachowicz A."/>
            <person name="Lenormand P."/>
            <person name="Namane A."/>
            <person name="Darfeuille F."/>
            <person name="Thibonnier M."/>
            <person name="De Reuse H."/>
        </authorList>
    </citation>
    <scope>INTERACTION WITH RNJ</scope>
    <scope>SUBUNIT</scope>
    <source>
        <strain>ATCC 700392 / 26695</strain>
    </source>
</reference>
<feature type="chain" id="PRO_0000430105" description="DEAD-box ATP-dependent RNA helicase RhpA">
    <location>
        <begin position="1"/>
        <end position="492"/>
    </location>
</feature>
<feature type="domain" description="Helicase ATP-binding" evidence="2">
    <location>
        <begin position="51"/>
        <end position="220"/>
    </location>
</feature>
<feature type="domain" description="Helicase C-terminal" evidence="3">
    <location>
        <begin position="231"/>
        <end position="393"/>
    </location>
</feature>
<feature type="region of interest" description="Disordered" evidence="4">
    <location>
        <begin position="445"/>
        <end position="492"/>
    </location>
</feature>
<feature type="short sequence motif" description="Q motif">
    <location>
        <begin position="20"/>
        <end position="48"/>
    </location>
</feature>
<feature type="short sequence motif" description="DEAD box">
    <location>
        <begin position="168"/>
        <end position="171"/>
    </location>
</feature>
<feature type="compositionally biased region" description="Basic residues" evidence="4">
    <location>
        <begin position="469"/>
        <end position="492"/>
    </location>
</feature>
<feature type="binding site" evidence="2">
    <location>
        <begin position="64"/>
        <end position="71"/>
    </location>
    <ligand>
        <name>ATP</name>
        <dbReference type="ChEBI" id="CHEBI:30616"/>
    </ligand>
</feature>
<organism>
    <name type="scientific">Helicobacter pylori (strain ATCC 700392 / 26695)</name>
    <name type="common">Campylobacter pylori</name>
    <dbReference type="NCBI Taxonomy" id="85962"/>
    <lineage>
        <taxon>Bacteria</taxon>
        <taxon>Pseudomonadati</taxon>
        <taxon>Campylobacterota</taxon>
        <taxon>Epsilonproteobacteria</taxon>
        <taxon>Campylobacterales</taxon>
        <taxon>Helicobacteraceae</taxon>
        <taxon>Helicobacter</taxon>
    </lineage>
</organism>
<gene>
    <name type="primary">rhpA</name>
    <name type="ordered locus">HP_0247</name>
    <name type="ordered locus">C694_01250</name>
</gene>
<accession>O25029</accession>
<sequence>MELNQPPLPTEIDGDAYHKPSFNDLGLKESVLKSVYEAGFTSPSPIQEKAIPAVLQGRDVIAQAQTGTGKTAAFALPIINNLKNNHTIEALVITPTRELAMQISDEIFKLGKHTRTKTVCVYGGQSVKKQCEFIKKNPQVMIATPGRLLDHLKNERIHKFVPKVVVLDESDEMLDMGFLDDIEEIFDYLPSEAQILLFSATMPEPIKRLADKILENPIKIHIAPSNITNTDITQRFYVINEHERAEAIMRLLDTQAPKKSIVFTRTKKEADELHQFLASKNYKSTALHGDMDQRDRRSSIMAFKKNDADVLVATDVASRGLDISGVSHVFNYHLPLNTESYIHRIGRTGRAGKKGMAITLVTPLEYKELLRMQKEIDSEIELFEIPTINENQIIKTLHDAKVSEGIISLYEQLTEIFEPSQLVLKLLSLQFETSKIGLNQQEIDAIQNPKEKTPKPSNKKTPQHERARSFKKGQHRDRHPKTNHYSKKPKRR</sequence>
<proteinExistence type="evidence at protein level"/>
<name>RHPA_HELPY</name>